<comment type="catalytic activity">
    <reaction>
        <text>N-carbamoylsarcosine + H2O + 2 H(+) = sarcosine + NH4(+) + CO2</text>
        <dbReference type="Rhea" id="RHEA:20057"/>
        <dbReference type="ChEBI" id="CHEBI:15377"/>
        <dbReference type="ChEBI" id="CHEBI:15378"/>
        <dbReference type="ChEBI" id="CHEBI:16526"/>
        <dbReference type="ChEBI" id="CHEBI:28938"/>
        <dbReference type="ChEBI" id="CHEBI:57433"/>
        <dbReference type="ChEBI" id="CHEBI:57490"/>
        <dbReference type="EC" id="3.5.1.59"/>
    </reaction>
</comment>
<comment type="cofactor">
    <cofactor>
        <name>sulfate</name>
        <dbReference type="ChEBI" id="CHEBI:16189"/>
    </cofactor>
    <text>Binds 1 sulfate ion per subunit.</text>
</comment>
<comment type="pathway">
    <text>Amine and polyamine degradation; creatinine degradation; sarcosine from creatinine: step 3/3.</text>
</comment>
<comment type="subunit">
    <text>Homotetramer.</text>
</comment>
<reference key="1">
    <citation type="journal article" date="1992" name="J. Mol. Biol.">
        <title>Crystal structure analysis, refinement and enzymatic reaction mechanism of N-carbamoylsarcosine amidohydrolase from Arthrobacter sp. at 2.0-A resolution.</title>
        <authorList>
            <person name="Romao M.J."/>
            <person name="Turk D."/>
            <person name="Gomis-Rueth F.-X."/>
            <person name="Huber R."/>
        </authorList>
    </citation>
    <scope>X-RAY CRYSTALLOGRAPHY (2.0 ANGSTROMS)</scope>
    <scope>SEQUENCE REVISION TO 184 AND 232</scope>
</reference>
<reference key="2">
    <citation type="journal article" date="1996" name="J. Mol. Biol.">
        <title>Crystallographic and fluorescence studies of ligand binding to N-carbamoylsarcosine amidohydrolase from Arthrobacter sp.</title>
        <authorList>
            <person name="Zajc A."/>
            <person name="Romao M.J."/>
            <person name="Turk D."/>
            <person name="Huber R."/>
        </authorList>
    </citation>
    <scope>X-RAY CRYSTALLOGRAPHY (2.28 ANGSTROMS) OF COMPLEX WITH INHIBITORS</scope>
</reference>
<organism>
    <name type="scientific">Arthrobacter sp</name>
    <dbReference type="NCBI Taxonomy" id="1667"/>
    <lineage>
        <taxon>Bacteria</taxon>
        <taxon>Bacillati</taxon>
        <taxon>Actinomycetota</taxon>
        <taxon>Actinomycetes</taxon>
        <taxon>Micrococcales</taxon>
        <taxon>Micrococcaceae</taxon>
        <taxon>Arthrobacter</taxon>
    </lineage>
</organism>
<protein>
    <recommendedName>
        <fullName>N-carbamoylsarcosine amidase</fullName>
        <ecNumber>3.5.1.59</ecNumber>
    </recommendedName>
    <alternativeName>
        <fullName>N-carbamoylsarcosine amidohydrolase</fullName>
        <shortName>CSHase</shortName>
    </alternativeName>
</protein>
<proteinExistence type="evidence at protein level"/>
<dbReference type="EC" id="3.5.1.59"/>
<dbReference type="PIR" id="S28969">
    <property type="entry name" value="S28969"/>
</dbReference>
<dbReference type="PDB" id="1NBA">
    <property type="method" value="X-ray"/>
    <property type="resolution" value="2.00 A"/>
    <property type="chains" value="A/B/C/D=1-264"/>
</dbReference>
<dbReference type="PDBsum" id="1NBA"/>
<dbReference type="SMR" id="P32400"/>
<dbReference type="BioCyc" id="MetaCyc:MONOMER-11021"/>
<dbReference type="UniPathway" id="UPA00274">
    <property type="reaction ID" value="UER00397"/>
</dbReference>
<dbReference type="EvolutionaryTrace" id="P32400"/>
<dbReference type="GO" id="GO:0050127">
    <property type="term" value="F:N-carbamoylsarcosine amidase activity"/>
    <property type="evidence" value="ECO:0007669"/>
    <property type="project" value="UniProtKB-EC"/>
</dbReference>
<dbReference type="GO" id="GO:0006602">
    <property type="term" value="P:creatinine catabolic process"/>
    <property type="evidence" value="ECO:0007669"/>
    <property type="project" value="UniProtKB-UniPathway"/>
</dbReference>
<dbReference type="CDD" id="cd01015">
    <property type="entry name" value="CSHase"/>
    <property type="match status" value="1"/>
</dbReference>
<dbReference type="Gene3D" id="3.40.50.850">
    <property type="entry name" value="Isochorismatase-like"/>
    <property type="match status" value="1"/>
</dbReference>
<dbReference type="InterPro" id="IPR000868">
    <property type="entry name" value="Isochorismatase-like_dom"/>
</dbReference>
<dbReference type="InterPro" id="IPR050272">
    <property type="entry name" value="Isochorismatase-like_hydrls"/>
</dbReference>
<dbReference type="InterPro" id="IPR036380">
    <property type="entry name" value="Isochorismatase-like_sf"/>
</dbReference>
<dbReference type="PANTHER" id="PTHR43540:SF1">
    <property type="entry name" value="ISOCHORISMATASE HYDROLASE"/>
    <property type="match status" value="1"/>
</dbReference>
<dbReference type="PANTHER" id="PTHR43540">
    <property type="entry name" value="PEROXYUREIDOACRYLATE/UREIDOACRYLATE AMIDOHYDROLASE-RELATED"/>
    <property type="match status" value="1"/>
</dbReference>
<dbReference type="Pfam" id="PF00857">
    <property type="entry name" value="Isochorismatase"/>
    <property type="match status" value="1"/>
</dbReference>
<dbReference type="SUPFAM" id="SSF52499">
    <property type="entry name" value="Isochorismatase-like hydrolases"/>
    <property type="match status" value="1"/>
</dbReference>
<feature type="chain" id="PRO_0000079397" description="N-carbamoylsarcosine amidase">
    <location>
        <begin position="1"/>
        <end position="264"/>
    </location>
</feature>
<feature type="region of interest" description="Disordered" evidence="1">
    <location>
        <begin position="240"/>
        <end position="264"/>
    </location>
</feature>
<feature type="active site" description="Nucleophile">
    <location>
        <position position="177"/>
    </location>
</feature>
<feature type="helix" evidence="2">
    <location>
        <begin position="9"/>
        <end position="33"/>
    </location>
</feature>
<feature type="strand" evidence="2">
    <location>
        <begin position="43"/>
        <end position="51"/>
    </location>
</feature>
<feature type="helix" evidence="2">
    <location>
        <begin position="54"/>
        <end position="57"/>
    </location>
</feature>
<feature type="strand" evidence="2">
    <location>
        <begin position="58"/>
        <end position="61"/>
    </location>
</feature>
<feature type="helix" evidence="2">
    <location>
        <begin position="68"/>
        <end position="84"/>
    </location>
</feature>
<feature type="strand" evidence="2">
    <location>
        <begin position="89"/>
        <end position="94"/>
    </location>
</feature>
<feature type="helix" evidence="2">
    <location>
        <begin position="109"/>
        <end position="113"/>
    </location>
</feature>
<feature type="helix" evidence="2">
    <location>
        <begin position="117"/>
        <end position="119"/>
    </location>
</feature>
<feature type="helix" evidence="2">
    <location>
        <begin position="125"/>
        <end position="127"/>
    </location>
</feature>
<feature type="helix" evidence="2">
    <location>
        <begin position="131"/>
        <end position="133"/>
    </location>
</feature>
<feature type="strand" evidence="2">
    <location>
        <begin position="140"/>
        <end position="150"/>
    </location>
</feature>
<feature type="helix" evidence="2">
    <location>
        <begin position="155"/>
        <end position="161"/>
    </location>
</feature>
<feature type="strand" evidence="2">
    <location>
        <begin position="166"/>
        <end position="172"/>
    </location>
</feature>
<feature type="turn" evidence="2">
    <location>
        <begin position="174"/>
        <end position="176"/>
    </location>
</feature>
<feature type="helix" evidence="2">
    <location>
        <begin position="177"/>
        <end position="188"/>
    </location>
</feature>
<feature type="strand" evidence="2">
    <location>
        <begin position="191"/>
        <end position="195"/>
    </location>
</feature>
<feature type="helix" evidence="2">
    <location>
        <begin position="196"/>
        <end position="198"/>
    </location>
</feature>
<feature type="strand" evidence="2">
    <location>
        <begin position="202"/>
        <end position="205"/>
    </location>
</feature>
<feature type="helix" evidence="2">
    <location>
        <begin position="206"/>
        <end position="217"/>
    </location>
</feature>
<feature type="strand" evidence="2">
    <location>
        <begin position="220"/>
        <end position="222"/>
    </location>
</feature>
<feature type="helix" evidence="2">
    <location>
        <begin position="224"/>
        <end position="233"/>
    </location>
</feature>
<feature type="helix" evidence="2">
    <location>
        <begin position="237"/>
        <end position="239"/>
    </location>
</feature>
<name>CSH_ARTSP</name>
<accession>P32400</accession>
<evidence type="ECO:0000256" key="1">
    <source>
        <dbReference type="SAM" id="MobiDB-lite"/>
    </source>
</evidence>
<evidence type="ECO:0007829" key="2">
    <source>
        <dbReference type="PDB" id="1NBA"/>
    </source>
</evidence>
<sequence>MTETSGTFNDIEARLAAVLEEAFEAGTSIYNERGFKRRIGYGNRPAVIHIDLANAWTQPGHPFSCPGMETIIPNVQRINEAARAKGVPVFYTTNVYRNRDASSGTNDMGLWYSKIPTETLPADSYWAQIDDRIAPADGEVVIEKNRASAFPGTNLELFLTSNRIDTLIVTGATAAGCVRHTVEDAIAKGFRPIIPRETIGDRVPGVVQWNLYDIDNKFGDVESTDSVVQYLDALPQFEDTVPKTLSDPQPEVEAPADPVFAEQH</sequence>
<keyword id="KW-0002">3D-structure</keyword>
<keyword id="KW-0378">Hydrolase</keyword>